<reference key="1">
    <citation type="journal article" date="2006" name="BMC Genomics">
        <title>The genome of the square archaeon Haloquadratum walsbyi: life at the limits of water activity.</title>
        <authorList>
            <person name="Bolhuis H."/>
            <person name="Palm P."/>
            <person name="Wende A."/>
            <person name="Falb M."/>
            <person name="Rampp M."/>
            <person name="Rodriguez-Valera F."/>
            <person name="Pfeiffer F."/>
            <person name="Oesterhelt D."/>
        </authorList>
    </citation>
    <scope>NUCLEOTIDE SEQUENCE [LARGE SCALE GENOMIC DNA]</scope>
    <source>
        <strain>DSM 16790 / HBSQ001</strain>
    </source>
</reference>
<organism>
    <name type="scientific">Haloquadratum walsbyi (strain DSM 16790 / HBSQ001)</name>
    <dbReference type="NCBI Taxonomy" id="362976"/>
    <lineage>
        <taxon>Archaea</taxon>
        <taxon>Methanobacteriati</taxon>
        <taxon>Methanobacteriota</taxon>
        <taxon>Stenosarchaea group</taxon>
        <taxon>Halobacteria</taxon>
        <taxon>Halobacteriales</taxon>
        <taxon>Haloferacaceae</taxon>
        <taxon>Haloquadratum</taxon>
    </lineage>
</organism>
<evidence type="ECO:0000255" key="1">
    <source>
        <dbReference type="HAMAP-Rule" id="MF_00369"/>
    </source>
</evidence>
<evidence type="ECO:0000256" key="2">
    <source>
        <dbReference type="SAM" id="MobiDB-lite"/>
    </source>
</evidence>
<evidence type="ECO:0000305" key="3"/>
<gene>
    <name evidence="1" type="primary">rpl21e</name>
    <name type="ordered locus">HQ_2896A</name>
</gene>
<protein>
    <recommendedName>
        <fullName evidence="1">Large ribosomal subunit protein eL21</fullName>
    </recommendedName>
    <alternativeName>
        <fullName evidence="3">50S ribosomal protein L21e</fullName>
    </alternativeName>
</protein>
<keyword id="KW-1185">Reference proteome</keyword>
<keyword id="KW-0687">Ribonucleoprotein</keyword>
<keyword id="KW-0689">Ribosomal protein</keyword>
<sequence>MPSSNGPMTGTRDKLSNSPRERGMSPPQRAIQEYDEGQKVHLRIDPSVREGRFHPRFNGHTGEVTGKQGRAFKIKIIDGGKEKTLIARPAHLRAQE</sequence>
<dbReference type="EMBL" id="AM180088">
    <property type="protein sequence ID" value="CAJ53003.1"/>
    <property type="molecule type" value="Genomic_DNA"/>
</dbReference>
<dbReference type="RefSeq" id="WP_011572114.1">
    <property type="nucleotide sequence ID" value="NC_008212.1"/>
</dbReference>
<dbReference type="SMR" id="Q18G97"/>
<dbReference type="STRING" id="362976.HQ_2896A"/>
<dbReference type="GeneID" id="4194611"/>
<dbReference type="KEGG" id="hwa:HQ_2896A"/>
<dbReference type="eggNOG" id="arCOG04129">
    <property type="taxonomic scope" value="Archaea"/>
</dbReference>
<dbReference type="HOGENOM" id="CLU_103610_1_1_2"/>
<dbReference type="Proteomes" id="UP000001975">
    <property type="component" value="Chromosome"/>
</dbReference>
<dbReference type="GO" id="GO:1990904">
    <property type="term" value="C:ribonucleoprotein complex"/>
    <property type="evidence" value="ECO:0007669"/>
    <property type="project" value="UniProtKB-KW"/>
</dbReference>
<dbReference type="GO" id="GO:0005840">
    <property type="term" value="C:ribosome"/>
    <property type="evidence" value="ECO:0007669"/>
    <property type="project" value="UniProtKB-KW"/>
</dbReference>
<dbReference type="GO" id="GO:0003735">
    <property type="term" value="F:structural constituent of ribosome"/>
    <property type="evidence" value="ECO:0007669"/>
    <property type="project" value="InterPro"/>
</dbReference>
<dbReference type="GO" id="GO:0006412">
    <property type="term" value="P:translation"/>
    <property type="evidence" value="ECO:0007669"/>
    <property type="project" value="UniProtKB-UniRule"/>
</dbReference>
<dbReference type="Gene3D" id="2.30.30.70">
    <property type="entry name" value="Ribosomal protein L21"/>
    <property type="match status" value="1"/>
</dbReference>
<dbReference type="HAMAP" id="MF_00369">
    <property type="entry name" value="Ribosomal_eL21"/>
    <property type="match status" value="1"/>
</dbReference>
<dbReference type="InterPro" id="IPR001147">
    <property type="entry name" value="Ribosomal_eL21"/>
</dbReference>
<dbReference type="InterPro" id="IPR022856">
    <property type="entry name" value="Ribosomal_eL21_arc"/>
</dbReference>
<dbReference type="InterPro" id="IPR018259">
    <property type="entry name" value="Ribosomal_eL21_CS"/>
</dbReference>
<dbReference type="InterPro" id="IPR036948">
    <property type="entry name" value="Ribosomal_eL21_sf"/>
</dbReference>
<dbReference type="InterPro" id="IPR008991">
    <property type="entry name" value="Translation_prot_SH3-like_sf"/>
</dbReference>
<dbReference type="NCBIfam" id="NF003303">
    <property type="entry name" value="PRK04306.1"/>
    <property type="match status" value="1"/>
</dbReference>
<dbReference type="Pfam" id="PF01157">
    <property type="entry name" value="Ribosomal_L21e"/>
    <property type="match status" value="1"/>
</dbReference>
<dbReference type="SUPFAM" id="SSF50104">
    <property type="entry name" value="Translation proteins SH3-like domain"/>
    <property type="match status" value="1"/>
</dbReference>
<dbReference type="PROSITE" id="PS01171">
    <property type="entry name" value="RIBOSOMAL_L21E"/>
    <property type="match status" value="1"/>
</dbReference>
<comment type="similarity">
    <text evidence="1">Belongs to the eukaryotic ribosomal protein eL21 family.</text>
</comment>
<accession>Q18G97</accession>
<name>RL21_HALWD</name>
<feature type="chain" id="PRO_1000007115" description="Large ribosomal subunit protein eL21">
    <location>
        <begin position="1"/>
        <end position="96"/>
    </location>
</feature>
<feature type="region of interest" description="Disordered" evidence="2">
    <location>
        <begin position="1"/>
        <end position="37"/>
    </location>
</feature>
<feature type="compositionally biased region" description="Basic and acidic residues" evidence="2">
    <location>
        <begin position="11"/>
        <end position="23"/>
    </location>
</feature>
<proteinExistence type="inferred from homology"/>